<evidence type="ECO:0000255" key="1">
    <source>
        <dbReference type="HAMAP-Rule" id="MF_00023"/>
    </source>
</evidence>
<keyword id="KW-0963">Cytoplasm</keyword>
<keyword id="KW-0694">RNA-binding</keyword>
<name>SSRP_STAAM</name>
<organism>
    <name type="scientific">Staphylococcus aureus (strain Mu50 / ATCC 700699)</name>
    <dbReference type="NCBI Taxonomy" id="158878"/>
    <lineage>
        <taxon>Bacteria</taxon>
        <taxon>Bacillati</taxon>
        <taxon>Bacillota</taxon>
        <taxon>Bacilli</taxon>
        <taxon>Bacillales</taxon>
        <taxon>Staphylococcaceae</taxon>
        <taxon>Staphylococcus</taxon>
    </lineage>
</organism>
<reference key="1">
    <citation type="journal article" date="2001" name="Lancet">
        <title>Whole genome sequencing of meticillin-resistant Staphylococcus aureus.</title>
        <authorList>
            <person name="Kuroda M."/>
            <person name="Ohta T."/>
            <person name="Uchiyama I."/>
            <person name="Baba T."/>
            <person name="Yuzawa H."/>
            <person name="Kobayashi I."/>
            <person name="Cui L."/>
            <person name="Oguchi A."/>
            <person name="Aoki K."/>
            <person name="Nagai Y."/>
            <person name="Lian J.-Q."/>
            <person name="Ito T."/>
            <person name="Kanamori M."/>
            <person name="Matsumaru H."/>
            <person name="Maruyama A."/>
            <person name="Murakami H."/>
            <person name="Hosoyama A."/>
            <person name="Mizutani-Ui Y."/>
            <person name="Takahashi N.K."/>
            <person name="Sawano T."/>
            <person name="Inoue R."/>
            <person name="Kaito C."/>
            <person name="Sekimizu K."/>
            <person name="Hirakawa H."/>
            <person name="Kuhara S."/>
            <person name="Goto S."/>
            <person name="Yabuzaki J."/>
            <person name="Kanehisa M."/>
            <person name="Yamashita A."/>
            <person name="Oshima K."/>
            <person name="Furuya K."/>
            <person name="Yoshino C."/>
            <person name="Shiba T."/>
            <person name="Hattori M."/>
            <person name="Ogasawara N."/>
            <person name="Hayashi H."/>
            <person name="Hiramatsu K."/>
        </authorList>
    </citation>
    <scope>NUCLEOTIDE SEQUENCE [LARGE SCALE GENOMIC DNA]</scope>
    <source>
        <strain>Mu50 / ATCC 700699</strain>
    </source>
</reference>
<comment type="function">
    <text evidence="1">Required for rescue of stalled ribosomes mediated by trans-translation. Binds to transfer-messenger RNA (tmRNA), required for stable association of tmRNA with ribosomes. tmRNA and SmpB together mimic tRNA shape, replacing the anticodon stem-loop with SmpB. tmRNA is encoded by the ssrA gene; the 2 termini fold to resemble tRNA(Ala) and it encodes a 'tag peptide', a short internal open reading frame. During trans-translation Ala-aminoacylated tmRNA acts like a tRNA, entering the A-site of stalled ribosomes, displacing the stalled mRNA. The ribosome then switches to translate the ORF on the tmRNA; the nascent peptide is terminated with the 'tag peptide' encoded by the tmRNA and targeted for degradation. The ribosome is freed to recommence translation, which seems to be the essential function of trans-translation.</text>
</comment>
<comment type="subcellular location">
    <subcellularLocation>
        <location evidence="1">Cytoplasm</location>
    </subcellularLocation>
    <text evidence="1">The tmRNA-SmpB complex associates with stalled 70S ribosomes.</text>
</comment>
<comment type="similarity">
    <text evidence="1">Belongs to the SmpB family.</text>
</comment>
<protein>
    <recommendedName>
        <fullName evidence="1">SsrA-binding protein</fullName>
    </recommendedName>
    <alternativeName>
        <fullName evidence="1">Small protein B</fullName>
    </alternativeName>
</protein>
<dbReference type="EMBL" id="BA000017">
    <property type="protein sequence ID" value="BAB56944.1"/>
    <property type="molecule type" value="Genomic_DNA"/>
</dbReference>
<dbReference type="RefSeq" id="WP_001085183.1">
    <property type="nucleotide sequence ID" value="NC_002758.2"/>
</dbReference>
<dbReference type="SMR" id="P66862"/>
<dbReference type="KEGG" id="sav:SAV0782"/>
<dbReference type="HOGENOM" id="CLU_108953_0_0_9"/>
<dbReference type="PhylomeDB" id="P66862"/>
<dbReference type="Proteomes" id="UP000002481">
    <property type="component" value="Chromosome"/>
</dbReference>
<dbReference type="GO" id="GO:0005829">
    <property type="term" value="C:cytosol"/>
    <property type="evidence" value="ECO:0007669"/>
    <property type="project" value="TreeGrafter"/>
</dbReference>
<dbReference type="GO" id="GO:0003723">
    <property type="term" value="F:RNA binding"/>
    <property type="evidence" value="ECO:0007669"/>
    <property type="project" value="UniProtKB-UniRule"/>
</dbReference>
<dbReference type="GO" id="GO:0070929">
    <property type="term" value="P:trans-translation"/>
    <property type="evidence" value="ECO:0007669"/>
    <property type="project" value="UniProtKB-UniRule"/>
</dbReference>
<dbReference type="CDD" id="cd09294">
    <property type="entry name" value="SmpB"/>
    <property type="match status" value="1"/>
</dbReference>
<dbReference type="Gene3D" id="2.40.280.10">
    <property type="match status" value="1"/>
</dbReference>
<dbReference type="HAMAP" id="MF_00023">
    <property type="entry name" value="SmpB"/>
    <property type="match status" value="1"/>
</dbReference>
<dbReference type="InterPro" id="IPR023620">
    <property type="entry name" value="SmpB"/>
</dbReference>
<dbReference type="InterPro" id="IPR000037">
    <property type="entry name" value="SsrA-bd_prot"/>
</dbReference>
<dbReference type="InterPro" id="IPR020081">
    <property type="entry name" value="SsrA-bd_prot_CS"/>
</dbReference>
<dbReference type="NCBIfam" id="NF003843">
    <property type="entry name" value="PRK05422.1"/>
    <property type="match status" value="1"/>
</dbReference>
<dbReference type="NCBIfam" id="TIGR00086">
    <property type="entry name" value="smpB"/>
    <property type="match status" value="1"/>
</dbReference>
<dbReference type="PANTHER" id="PTHR30308:SF2">
    <property type="entry name" value="SSRA-BINDING PROTEIN"/>
    <property type="match status" value="1"/>
</dbReference>
<dbReference type="PANTHER" id="PTHR30308">
    <property type="entry name" value="TMRNA-BINDING COMPONENT OF TRANS-TRANSLATION TAGGING COMPLEX"/>
    <property type="match status" value="1"/>
</dbReference>
<dbReference type="Pfam" id="PF01668">
    <property type="entry name" value="SmpB"/>
    <property type="match status" value="1"/>
</dbReference>
<dbReference type="SUPFAM" id="SSF74982">
    <property type="entry name" value="Small protein B (SmpB)"/>
    <property type="match status" value="1"/>
</dbReference>
<dbReference type="PROSITE" id="PS01317">
    <property type="entry name" value="SSRP"/>
    <property type="match status" value="1"/>
</dbReference>
<gene>
    <name evidence="1" type="primary">smpB</name>
    <name type="synonym">ssrP</name>
    <name type="ordered locus">SAV0782</name>
</gene>
<accession>P66862</accession>
<accession>Q99VK0</accession>
<sequence>MAKKKSPGTLAENRKARHDYNIEDTIEAGIVLQGTEIKSIRRGSANLKDSYAQVKNGEMYLNNMHIAPYEEGNRFNHDPLRSRKLLLHKREIFKLGEQTREIGYSIVPLKLYLKHGHCKVLLGVARGKKKYDKRQALKEKAVKRDVARDMKARY</sequence>
<proteinExistence type="inferred from homology"/>
<feature type="chain" id="PRO_0000103029" description="SsrA-binding protein">
    <location>
        <begin position="1"/>
        <end position="154"/>
    </location>
</feature>